<accession>Q9QSK1</accession>
<organismHost>
    <name type="scientific">Acheta domesticus</name>
    <name type="common">House cricket</name>
    <dbReference type="NCBI Taxonomy" id="6997"/>
</organismHost>
<organismHost>
    <name type="scientific">Chilo suppressalis</name>
    <name type="common">Asiatic rice borer moth</name>
    <dbReference type="NCBI Taxonomy" id="168631"/>
</organismHost>
<organismHost>
    <name type="scientific">Gryllus bimaculatus</name>
    <name type="common">Two-spotted cricket</name>
    <dbReference type="NCBI Taxonomy" id="6999"/>
</organismHost>
<organismHost>
    <name type="scientific">Gryllus campestris</name>
    <dbReference type="NCBI Taxonomy" id="58607"/>
</organismHost>
<organismHost>
    <name type="scientific">Spodoptera frugiperda</name>
    <name type="common">Fall armyworm</name>
    <dbReference type="NCBI Taxonomy" id="7108"/>
</organismHost>
<dbReference type="EC" id="5.6.2.2" evidence="3"/>
<dbReference type="EMBL" id="AF303741">
    <property type="protein sequence ID" value="AAD48151.1"/>
    <property type="molecule type" value="Genomic_DNA"/>
</dbReference>
<dbReference type="RefSeq" id="NP_149508.1">
    <property type="nucleotide sequence ID" value="NC_003038.1"/>
</dbReference>
<dbReference type="SMR" id="Q9QSK1"/>
<dbReference type="GeneID" id="921682"/>
<dbReference type="KEGG" id="vg:921682"/>
<dbReference type="OrthoDB" id="569at10239"/>
<dbReference type="Proteomes" id="UP000001359">
    <property type="component" value="Genome"/>
</dbReference>
<dbReference type="GO" id="GO:0005524">
    <property type="term" value="F:ATP binding"/>
    <property type="evidence" value="ECO:0007669"/>
    <property type="project" value="UniProtKB-KW"/>
</dbReference>
<dbReference type="GO" id="GO:0003677">
    <property type="term" value="F:DNA binding"/>
    <property type="evidence" value="ECO:0007669"/>
    <property type="project" value="UniProtKB-KW"/>
</dbReference>
<dbReference type="GO" id="GO:0003918">
    <property type="term" value="F:DNA topoisomerase type II (double strand cut, ATP-hydrolyzing) activity"/>
    <property type="evidence" value="ECO:0007669"/>
    <property type="project" value="UniProtKB-EC"/>
</dbReference>
<dbReference type="GO" id="GO:0046872">
    <property type="term" value="F:metal ion binding"/>
    <property type="evidence" value="ECO:0007669"/>
    <property type="project" value="UniProtKB-KW"/>
</dbReference>
<dbReference type="GO" id="GO:0006265">
    <property type="term" value="P:DNA topological change"/>
    <property type="evidence" value="ECO:0007669"/>
    <property type="project" value="InterPro"/>
</dbReference>
<dbReference type="GO" id="GO:0000819">
    <property type="term" value="P:sister chromatid segregation"/>
    <property type="evidence" value="ECO:0007669"/>
    <property type="project" value="TreeGrafter"/>
</dbReference>
<dbReference type="FunFam" id="3.40.50.670:FF:000001">
    <property type="entry name" value="DNA topoisomerase 2"/>
    <property type="match status" value="1"/>
</dbReference>
<dbReference type="Gene3D" id="3.30.1360.40">
    <property type="match status" value="1"/>
</dbReference>
<dbReference type="Gene3D" id="3.30.1490.30">
    <property type="match status" value="1"/>
</dbReference>
<dbReference type="Gene3D" id="3.30.230.10">
    <property type="match status" value="1"/>
</dbReference>
<dbReference type="Gene3D" id="3.40.50.670">
    <property type="match status" value="1"/>
</dbReference>
<dbReference type="Gene3D" id="3.30.565.10">
    <property type="entry name" value="Histidine kinase-like ATPase, C-terminal domain"/>
    <property type="match status" value="1"/>
</dbReference>
<dbReference type="Gene3D" id="3.90.199.10">
    <property type="entry name" value="Topoisomerase II, domain 5"/>
    <property type="match status" value="1"/>
</dbReference>
<dbReference type="Gene3D" id="1.10.268.10">
    <property type="entry name" value="Topoisomerase, domain 3"/>
    <property type="match status" value="1"/>
</dbReference>
<dbReference type="InterPro" id="IPR050634">
    <property type="entry name" value="DNA_Topoisomerase_II"/>
</dbReference>
<dbReference type="InterPro" id="IPR036890">
    <property type="entry name" value="HATPase_C_sf"/>
</dbReference>
<dbReference type="InterPro" id="IPR020568">
    <property type="entry name" value="Ribosomal_Su5_D2-typ_SF"/>
</dbReference>
<dbReference type="InterPro" id="IPR014721">
    <property type="entry name" value="Ribsml_uS5_D2-typ_fold_subgr"/>
</dbReference>
<dbReference type="InterPro" id="IPR001241">
    <property type="entry name" value="Topo_IIA"/>
</dbReference>
<dbReference type="InterPro" id="IPR013760">
    <property type="entry name" value="Topo_IIA-like_dom_sf"/>
</dbReference>
<dbReference type="InterPro" id="IPR013758">
    <property type="entry name" value="Topo_IIA_A/C_ab"/>
</dbReference>
<dbReference type="InterPro" id="IPR013757">
    <property type="entry name" value="Topo_IIA_A_a_sf"/>
</dbReference>
<dbReference type="InterPro" id="IPR013759">
    <property type="entry name" value="Topo_IIA_B_C"/>
</dbReference>
<dbReference type="InterPro" id="IPR013506">
    <property type="entry name" value="Topo_IIA_bsu_dom2"/>
</dbReference>
<dbReference type="InterPro" id="IPR002205">
    <property type="entry name" value="Topo_IIA_dom_A"/>
</dbReference>
<dbReference type="InterPro" id="IPR001154">
    <property type="entry name" value="TopoII_euk"/>
</dbReference>
<dbReference type="InterPro" id="IPR031660">
    <property type="entry name" value="TOPRIM_C"/>
</dbReference>
<dbReference type="InterPro" id="IPR006171">
    <property type="entry name" value="TOPRIM_dom"/>
</dbReference>
<dbReference type="PANTHER" id="PTHR10169:SF38">
    <property type="entry name" value="DNA TOPOISOMERASE 2"/>
    <property type="match status" value="1"/>
</dbReference>
<dbReference type="PANTHER" id="PTHR10169">
    <property type="entry name" value="DNA TOPOISOMERASE/GYRASE"/>
    <property type="match status" value="1"/>
</dbReference>
<dbReference type="Pfam" id="PF00204">
    <property type="entry name" value="DNA_gyraseB"/>
    <property type="match status" value="1"/>
</dbReference>
<dbReference type="Pfam" id="PF00521">
    <property type="entry name" value="DNA_topoisoIV"/>
    <property type="match status" value="1"/>
</dbReference>
<dbReference type="Pfam" id="PF16898">
    <property type="entry name" value="TOPRIM_C"/>
    <property type="match status" value="1"/>
</dbReference>
<dbReference type="PRINTS" id="PR01158">
    <property type="entry name" value="TOPISMRASEII"/>
</dbReference>
<dbReference type="PRINTS" id="PR00418">
    <property type="entry name" value="TPI2FAMILY"/>
</dbReference>
<dbReference type="SMART" id="SM00433">
    <property type="entry name" value="TOP2c"/>
    <property type="match status" value="1"/>
</dbReference>
<dbReference type="SMART" id="SM00434">
    <property type="entry name" value="TOP4c"/>
    <property type="match status" value="1"/>
</dbReference>
<dbReference type="SUPFAM" id="SSF55874">
    <property type="entry name" value="ATPase domain of HSP90 chaperone/DNA topoisomerase II/histidine kinase"/>
    <property type="match status" value="1"/>
</dbReference>
<dbReference type="SUPFAM" id="SSF54211">
    <property type="entry name" value="Ribosomal protein S5 domain 2-like"/>
    <property type="match status" value="1"/>
</dbReference>
<dbReference type="SUPFAM" id="SSF56719">
    <property type="entry name" value="Type II DNA topoisomerase"/>
    <property type="match status" value="1"/>
</dbReference>
<dbReference type="PROSITE" id="PS52040">
    <property type="entry name" value="TOPO_IIA"/>
    <property type="match status" value="1"/>
</dbReference>
<dbReference type="PROSITE" id="PS50880">
    <property type="entry name" value="TOPRIM"/>
    <property type="match status" value="1"/>
</dbReference>
<proteinExistence type="inferred from homology"/>
<evidence type="ECO:0000250" key="1"/>
<evidence type="ECO:0000250" key="2">
    <source>
        <dbReference type="UniProtKB" id="P11388"/>
    </source>
</evidence>
<evidence type="ECO:0000255" key="3">
    <source>
        <dbReference type="PROSITE-ProRule" id="PRU00995"/>
    </source>
</evidence>
<evidence type="ECO:0000255" key="4">
    <source>
        <dbReference type="PROSITE-ProRule" id="PRU01384"/>
    </source>
</evidence>
<evidence type="ECO:0000305" key="5"/>
<name>TOP2_IIV6</name>
<sequence length="1132" mass="129877">MATSNHKKQYTTLSDIDHVLLRPEVIIGSTVPMEQTEYVVDENFSEILEKQVFVSEALIRIFVEVLANAVDNIHRSKGSSTPCKSIKIKIEDDGTTMIHNDGQVIKISKEENDGIEINGKKCSVYNHELVFGHLRSSSNYDDTVVRQTSGKNGLGVKCTNILSKSFKVIGVDPENKKKFVQEWTNNMKETSGPKVTTSSSKTGYTEVIYCPDFERLGNFSSDIIGIFRKHVLDVAMLASSEGVSVYFNDKKLPIKKFSDYTKLFKLEKESISITEEDGSSEVTIAFVERDGKKKPISFVNGLFTKHGGQHVDGWTKPFFANLLSVLNKPSKTYKDLKLSLKDVTPYFRFFVKSTVDKPQFDCQNKNMLKSPCLKYTIPDKIITKVCKWTSVQELKQSSFEKLLKGKDNNIIKTLNDKKRRPKVSVKEYDPANKAGTTLSEKCTLIVCEGLSAKTYAVAGISTGISFTGTDTKKGRDWFGILPLRGKFLNVRNANNDKMIKNTVVTDLVNAMGLTFGMDYSTQKSRKSLNYGSIIIIPDPDEDGIHIEGLVLNFFHHHFSSLFNPVVPNLKDFPFISSMKIPIIKVIEKPLKGRREIEFFTHEAFHKFKNENKWHKNHEIKYFKGLGTTKHEDVPKIFGKKMVVFNIDDNAHENMEKAFKDEEADERKEWLKQYNPNARTFDLDSPNKILQLNISTFINEELIKFSIEDCKRSLPHLIDGLKESQRKVIFGLKQWNGKNNIKVAQLGAFVAQKTDYKHGEQNLFDTIIKMAQTFVGANNIPLLEEDGQFGTRLSGGKDAASPRYIFVNQPPILNKIFRPEDDPILNYTLDGEPVFYAPVIPLICINGSVGVGTGFSCNIPMFNPSEIIDGLKQWINMREQGEKYVFKYKPWYKGFTGKIEKNGSGRYISYGTLSNEASNNGMYQYTVSELPINMWTDKFKEMCDQYRESNLIKTCDNYSEVTTVNFKISSEHELTIENLKLRSYIHTSNMVMFDHEGKIHKYETLNGIMQRFCKERIKIYEKRRQYMLQKLNKSLTISENKKRFMEDVMNQKIKILLQEDEVVHQQLLDMNYYKDDEGEFDYLLNMNIGGFRKKNVDKLISKIDDLKKDIMWYTNTNEGQMWLKDILELEPFI</sequence>
<keyword id="KW-0067">ATP-binding</keyword>
<keyword id="KW-0238">DNA-binding</keyword>
<keyword id="KW-0413">Isomerase</keyword>
<keyword id="KW-0460">Magnesium</keyword>
<keyword id="KW-0479">Metal-binding</keyword>
<keyword id="KW-0547">Nucleotide-binding</keyword>
<keyword id="KW-1185">Reference proteome</keyword>
<keyword id="KW-0799">Topoisomerase</keyword>
<organism>
    <name type="scientific">Invertebrate iridescent virus 6</name>
    <name type="common">IIV-6</name>
    <name type="synonym">Chilo iridescent virus</name>
    <dbReference type="NCBI Taxonomy" id="176652"/>
    <lineage>
        <taxon>Viruses</taxon>
        <taxon>Varidnaviria</taxon>
        <taxon>Bamfordvirae</taxon>
        <taxon>Nucleocytoviricota</taxon>
        <taxon>Megaviricetes</taxon>
        <taxon>Pimascovirales</taxon>
        <taxon>Iridoviridae</taxon>
        <taxon>Betairidovirinae</taxon>
        <taxon>Iridovirus</taxon>
    </lineage>
</organism>
<protein>
    <recommendedName>
        <fullName>DNA topoisomerase 2</fullName>
        <ecNumber evidence="3">5.6.2.2</ecNumber>
    </recommendedName>
    <alternativeName>
        <fullName>DNA topoisomerase II</fullName>
    </alternativeName>
</protein>
<feature type="chain" id="PRO_0000377771" description="DNA topoisomerase 2">
    <location>
        <begin position="1"/>
        <end position="1132"/>
    </location>
</feature>
<feature type="domain" description="Toprim" evidence="3">
    <location>
        <begin position="442"/>
        <end position="577"/>
    </location>
</feature>
<feature type="domain" description="Topo IIA-type catalytic" evidence="4">
    <location>
        <begin position="713"/>
        <end position="1125"/>
    </location>
</feature>
<feature type="region of interest" description="Interaction with DNA" evidence="2">
    <location>
        <begin position="327"/>
        <end position="329"/>
    </location>
</feature>
<feature type="region of interest" description="Interaction with DNA" evidence="2">
    <location>
        <begin position="979"/>
        <end position="988"/>
    </location>
</feature>
<feature type="active site" description="O-(5'-phospho-DNA)-tyrosine intermediate" evidence="4">
    <location>
        <position position="803"/>
    </location>
</feature>
<feature type="binding site" evidence="2">
    <location>
        <position position="68"/>
    </location>
    <ligand>
        <name>ATP</name>
        <dbReference type="ChEBI" id="CHEBI:30616"/>
    </ligand>
</feature>
<feature type="binding site" evidence="2">
    <location>
        <position position="100"/>
    </location>
    <ligand>
        <name>ATP</name>
        <dbReference type="ChEBI" id="CHEBI:30616"/>
    </ligand>
</feature>
<feature type="binding site" evidence="2">
    <location>
        <begin position="137"/>
        <end position="139"/>
    </location>
    <ligand>
        <name>ATP</name>
        <dbReference type="ChEBI" id="CHEBI:30616"/>
    </ligand>
</feature>
<feature type="binding site" evidence="2">
    <location>
        <begin position="150"/>
        <end position="157"/>
    </location>
    <ligand>
        <name>ATP</name>
        <dbReference type="ChEBI" id="CHEBI:30616"/>
    </ligand>
</feature>
<feature type="binding site" evidence="2">
    <location>
        <begin position="363"/>
        <end position="365"/>
    </location>
    <ligand>
        <name>ATP</name>
        <dbReference type="ChEBI" id="CHEBI:30616"/>
    </ligand>
</feature>
<feature type="binding site" evidence="3">
    <location>
        <position position="448"/>
    </location>
    <ligand>
        <name>Mg(2+)</name>
        <dbReference type="ChEBI" id="CHEBI:18420"/>
        <label>1</label>
        <note>catalytic</note>
    </ligand>
</feature>
<feature type="binding site" evidence="3">
    <location>
        <position position="538"/>
    </location>
    <ligand>
        <name>Mg(2+)</name>
        <dbReference type="ChEBI" id="CHEBI:18420"/>
        <label>1</label>
        <note>catalytic</note>
    </ligand>
</feature>
<feature type="binding site" evidence="3">
    <location>
        <position position="538"/>
    </location>
    <ligand>
        <name>Mg(2+)</name>
        <dbReference type="ChEBI" id="CHEBI:18420"/>
        <label>2</label>
    </ligand>
</feature>
<feature type="binding site" evidence="3">
    <location>
        <position position="540"/>
    </location>
    <ligand>
        <name>Mg(2+)</name>
        <dbReference type="ChEBI" id="CHEBI:18420"/>
        <label>2</label>
    </ligand>
</feature>
<feature type="site" description="Interaction with DNA" evidence="3">
    <location>
        <position position="486"/>
    </location>
</feature>
<feature type="site" description="Interaction with DNA" evidence="2">
    <location>
        <position position="489"/>
    </location>
</feature>
<feature type="site" description="Interaction with DNA" evidence="2">
    <location>
        <position position="666"/>
    </location>
</feature>
<feature type="site" description="Interaction with DNA" evidence="2">
    <location>
        <position position="667"/>
    </location>
</feature>
<feature type="site" description="Interaction with DNA" evidence="2">
    <location>
        <position position="721"/>
    </location>
</feature>
<feature type="site" description="Interaction with DNA" evidence="2">
    <location>
        <position position="755"/>
    </location>
</feature>
<feature type="site" description="Transition state stabilizer" evidence="1">
    <location>
        <position position="802"/>
    </location>
</feature>
<feature type="site" description="Interaction with DNA" evidence="2">
    <location>
        <position position="934"/>
    </location>
</feature>
<reference key="1">
    <citation type="journal article" date="2001" name="Virology">
        <title>Analysis of the first complete DNA sequence of an invertebrate iridovirus: coding strategy of the genome of Chilo iridescent virus.</title>
        <authorList>
            <person name="Jakob N.J."/>
            <person name="Mueller K."/>
            <person name="Bahr U."/>
            <person name="Darai G."/>
        </authorList>
    </citation>
    <scope>NUCLEOTIDE SEQUENCE [LARGE SCALE GENOMIC DNA]</scope>
</reference>
<reference key="2">
    <citation type="journal article" date="2007" name="Virol. J.">
        <title>Comparative genomic analysis of the family Iridoviridae: re-annotating and defining the core set of iridovirus genes.</title>
        <authorList>
            <person name="Eaton H.E."/>
            <person name="Metcalf J."/>
            <person name="Penny E."/>
            <person name="Tcherepanov V."/>
            <person name="Upton C."/>
            <person name="Brunetti C.R."/>
        </authorList>
    </citation>
    <scope>GENOME REANNOTATION</scope>
</reference>
<gene>
    <name type="primary">TOP2</name>
    <name type="ORF">IIV6-045L</name>
</gene>
<comment type="function">
    <text>Can introduce negative superhelical turns into double-stranded circular DNA.</text>
</comment>
<comment type="catalytic activity">
    <reaction evidence="3">
        <text>ATP-dependent breakage, passage and rejoining of double-stranded DNA.</text>
        <dbReference type="EC" id="5.6.2.2"/>
    </reaction>
</comment>
<comment type="cofactor">
    <cofactor evidence="3">
        <name>Mg(2+)</name>
        <dbReference type="ChEBI" id="CHEBI:18420"/>
    </cofactor>
    <cofactor evidence="3">
        <name>Mn(2+)</name>
        <dbReference type="ChEBI" id="CHEBI:29035"/>
    </cofactor>
    <cofactor evidence="3">
        <name>Ca(2+)</name>
        <dbReference type="ChEBI" id="CHEBI:29108"/>
    </cofactor>
    <text evidence="3">Binds two Mg(2+) per subunit. The magnesium ions form salt bridges with both the protein and the DNA. Can also accept other divalent metal cations, such as Mn(2+) or Ca(2+).</text>
</comment>
<comment type="similarity">
    <text evidence="5">Belongs to the type II topoisomerase family.</text>
</comment>